<proteinExistence type="inferred from homology"/>
<protein>
    <recommendedName>
        <fullName evidence="1">Urocanate hydratase</fullName>
        <shortName evidence="1">Urocanase</shortName>
        <ecNumber evidence="1">4.2.1.49</ecNumber>
    </recommendedName>
    <alternativeName>
        <fullName evidence="1">Imidazolonepropionate hydrolase</fullName>
    </alternativeName>
</protein>
<sequence length="555" mass="60120">MTRHDATRVIRAATGTTLTAKSWLTEAPLRMLMNNLDPDVAERPQELVVYGGIGRAARDWESFDAIVAALTRLDEDHTLLVQSGKPVGVFRTHADAPRVLIANSNLVPRWANWDHFNELDQKGLAMYGQMTAGSWIYIGAQGIVQGTYETFVEMGRQHYDGNLAGKWLFTGGLGGMGGAQPLAAVMAGASCLAVECRRSSIDMRLRTGYLDTWTDSLDEALRLIEESCTARKPLSVGLLGNVADVLDELLLRGIRPDLLTDQTSAHDPVNGYLPQGWSVEEWDAKRVSAPKEVEAAARDSMANHIRAMLTFHALGVPTVDYGNNLRQMALEAGVDNAFDFPGFVPAYIRPLFCRGIGPFRWVALSGDPDDIAKTDAKVKELIPDDAHLHRWLDMAADKIAFQGLPARICWVGLGDRHRLGLAFNAMVRSGELKAPVVIGRDHLDSGSVASPNRETEAMADGSDAVSDWPLLNALLNTASGATWVSLHHGGGVGMGFSQHAGMVIVCDGSEAADKRLERVLWNDPATGVMRHADAGYAIATDCAKAKGLDLPGILR</sequence>
<reference key="1">
    <citation type="journal article" date="2002" name="Nature">
        <title>Comparison of the genomes of two Xanthomonas pathogens with differing host specificities.</title>
        <authorList>
            <person name="da Silva A.C.R."/>
            <person name="Ferro J.A."/>
            <person name="Reinach F.C."/>
            <person name="Farah C.S."/>
            <person name="Furlan L.R."/>
            <person name="Quaggio R.B."/>
            <person name="Monteiro-Vitorello C.B."/>
            <person name="Van Sluys M.A."/>
            <person name="Almeida N.F. Jr."/>
            <person name="Alves L.M.C."/>
            <person name="do Amaral A.M."/>
            <person name="Bertolini M.C."/>
            <person name="Camargo L.E.A."/>
            <person name="Camarotte G."/>
            <person name="Cannavan F."/>
            <person name="Cardozo J."/>
            <person name="Chambergo F."/>
            <person name="Ciapina L.P."/>
            <person name="Cicarelli R.M.B."/>
            <person name="Coutinho L.L."/>
            <person name="Cursino-Santos J.R."/>
            <person name="El-Dorry H."/>
            <person name="Faria J.B."/>
            <person name="Ferreira A.J.S."/>
            <person name="Ferreira R.C.C."/>
            <person name="Ferro M.I.T."/>
            <person name="Formighieri E.F."/>
            <person name="Franco M.C."/>
            <person name="Greggio C.C."/>
            <person name="Gruber A."/>
            <person name="Katsuyama A.M."/>
            <person name="Kishi L.T."/>
            <person name="Leite R.P."/>
            <person name="Lemos E.G.M."/>
            <person name="Lemos M.V.F."/>
            <person name="Locali E.C."/>
            <person name="Machado M.A."/>
            <person name="Madeira A.M.B.N."/>
            <person name="Martinez-Rossi N.M."/>
            <person name="Martins E.C."/>
            <person name="Meidanis J."/>
            <person name="Menck C.F.M."/>
            <person name="Miyaki C.Y."/>
            <person name="Moon D.H."/>
            <person name="Moreira L.M."/>
            <person name="Novo M.T.M."/>
            <person name="Okura V.K."/>
            <person name="Oliveira M.C."/>
            <person name="Oliveira V.R."/>
            <person name="Pereira H.A."/>
            <person name="Rossi A."/>
            <person name="Sena J.A.D."/>
            <person name="Silva C."/>
            <person name="de Souza R.F."/>
            <person name="Spinola L.A.F."/>
            <person name="Takita M.A."/>
            <person name="Tamura R.E."/>
            <person name="Teixeira E.C."/>
            <person name="Tezza R.I.D."/>
            <person name="Trindade dos Santos M."/>
            <person name="Truffi D."/>
            <person name="Tsai S.M."/>
            <person name="White F.F."/>
            <person name="Setubal J.C."/>
            <person name="Kitajima J.P."/>
        </authorList>
    </citation>
    <scope>NUCLEOTIDE SEQUENCE [LARGE SCALE GENOMIC DNA]</scope>
    <source>
        <strain>306</strain>
    </source>
</reference>
<organism>
    <name type="scientific">Xanthomonas axonopodis pv. citri (strain 306)</name>
    <dbReference type="NCBI Taxonomy" id="190486"/>
    <lineage>
        <taxon>Bacteria</taxon>
        <taxon>Pseudomonadati</taxon>
        <taxon>Pseudomonadota</taxon>
        <taxon>Gammaproteobacteria</taxon>
        <taxon>Lysobacterales</taxon>
        <taxon>Lysobacteraceae</taxon>
        <taxon>Xanthomonas</taxon>
    </lineage>
</organism>
<gene>
    <name evidence="1" type="primary">hutU</name>
    <name type="ordered locus">XAC1635</name>
</gene>
<evidence type="ECO:0000255" key="1">
    <source>
        <dbReference type="HAMAP-Rule" id="MF_00577"/>
    </source>
</evidence>
<comment type="function">
    <text evidence="1">Catalyzes the conversion of urocanate to 4-imidazolone-5-propionate.</text>
</comment>
<comment type="catalytic activity">
    <reaction evidence="1">
        <text>4-imidazolone-5-propanoate = trans-urocanate + H2O</text>
        <dbReference type="Rhea" id="RHEA:13101"/>
        <dbReference type="ChEBI" id="CHEBI:15377"/>
        <dbReference type="ChEBI" id="CHEBI:17771"/>
        <dbReference type="ChEBI" id="CHEBI:77893"/>
        <dbReference type="EC" id="4.2.1.49"/>
    </reaction>
</comment>
<comment type="cofactor">
    <cofactor evidence="1">
        <name>NAD(+)</name>
        <dbReference type="ChEBI" id="CHEBI:57540"/>
    </cofactor>
    <text evidence="1">Binds 1 NAD(+) per subunit.</text>
</comment>
<comment type="pathway">
    <text evidence="1">Amino-acid degradation; L-histidine degradation into L-glutamate; N-formimidoyl-L-glutamate from L-histidine: step 2/3.</text>
</comment>
<comment type="subcellular location">
    <subcellularLocation>
        <location evidence="1">Cytoplasm</location>
    </subcellularLocation>
</comment>
<comment type="similarity">
    <text evidence="1">Belongs to the urocanase family.</text>
</comment>
<accession>P58987</accession>
<name>HUTU_XANAC</name>
<keyword id="KW-0963">Cytoplasm</keyword>
<keyword id="KW-0369">Histidine metabolism</keyword>
<keyword id="KW-0456">Lyase</keyword>
<keyword id="KW-0520">NAD</keyword>
<dbReference type="EC" id="4.2.1.49" evidence="1"/>
<dbReference type="EMBL" id="AE008923">
    <property type="protein sequence ID" value="AAM36503.1"/>
    <property type="molecule type" value="Genomic_DNA"/>
</dbReference>
<dbReference type="RefSeq" id="WP_011051047.1">
    <property type="nucleotide sequence ID" value="NC_003919.1"/>
</dbReference>
<dbReference type="SMR" id="P58987"/>
<dbReference type="GeneID" id="66910793"/>
<dbReference type="KEGG" id="xac:XAC1635"/>
<dbReference type="eggNOG" id="COG2987">
    <property type="taxonomic scope" value="Bacteria"/>
</dbReference>
<dbReference type="HOGENOM" id="CLU_018868_0_1_6"/>
<dbReference type="UniPathway" id="UPA00379">
    <property type="reaction ID" value="UER00550"/>
</dbReference>
<dbReference type="Proteomes" id="UP000000576">
    <property type="component" value="Chromosome"/>
</dbReference>
<dbReference type="GO" id="GO:0005737">
    <property type="term" value="C:cytoplasm"/>
    <property type="evidence" value="ECO:0007669"/>
    <property type="project" value="UniProtKB-SubCell"/>
</dbReference>
<dbReference type="GO" id="GO:0016153">
    <property type="term" value="F:urocanate hydratase activity"/>
    <property type="evidence" value="ECO:0007669"/>
    <property type="project" value="UniProtKB-UniRule"/>
</dbReference>
<dbReference type="GO" id="GO:0019556">
    <property type="term" value="P:L-histidine catabolic process to glutamate and formamide"/>
    <property type="evidence" value="ECO:0007669"/>
    <property type="project" value="UniProtKB-UniPathway"/>
</dbReference>
<dbReference type="GO" id="GO:0019557">
    <property type="term" value="P:L-histidine catabolic process to glutamate and formate"/>
    <property type="evidence" value="ECO:0007669"/>
    <property type="project" value="UniProtKB-UniPathway"/>
</dbReference>
<dbReference type="FunFam" id="3.40.50.10730:FF:000001">
    <property type="entry name" value="Urocanate hydratase"/>
    <property type="match status" value="1"/>
</dbReference>
<dbReference type="Gene3D" id="3.40.50.10730">
    <property type="entry name" value="Urocanase like domains"/>
    <property type="match status" value="1"/>
</dbReference>
<dbReference type="Gene3D" id="3.40.1770.10">
    <property type="entry name" value="Urocanase superfamily"/>
    <property type="match status" value="1"/>
</dbReference>
<dbReference type="HAMAP" id="MF_00577">
    <property type="entry name" value="HutU"/>
    <property type="match status" value="1"/>
</dbReference>
<dbReference type="InterPro" id="IPR055351">
    <property type="entry name" value="Urocanase"/>
</dbReference>
<dbReference type="InterPro" id="IPR023637">
    <property type="entry name" value="Urocanase-like"/>
</dbReference>
<dbReference type="InterPro" id="IPR035401">
    <property type="entry name" value="Urocanase_C"/>
</dbReference>
<dbReference type="InterPro" id="IPR038364">
    <property type="entry name" value="Urocanase_central_sf"/>
</dbReference>
<dbReference type="InterPro" id="IPR023636">
    <property type="entry name" value="Urocanase_CS"/>
</dbReference>
<dbReference type="InterPro" id="IPR035400">
    <property type="entry name" value="Urocanase_N"/>
</dbReference>
<dbReference type="InterPro" id="IPR035085">
    <property type="entry name" value="Urocanase_Rossmann-like"/>
</dbReference>
<dbReference type="InterPro" id="IPR036190">
    <property type="entry name" value="Urocanase_sf"/>
</dbReference>
<dbReference type="NCBIfam" id="TIGR01228">
    <property type="entry name" value="hutU"/>
    <property type="match status" value="1"/>
</dbReference>
<dbReference type="NCBIfam" id="NF003820">
    <property type="entry name" value="PRK05414.1"/>
    <property type="match status" value="1"/>
</dbReference>
<dbReference type="PANTHER" id="PTHR12216">
    <property type="entry name" value="UROCANATE HYDRATASE"/>
    <property type="match status" value="1"/>
</dbReference>
<dbReference type="PANTHER" id="PTHR12216:SF4">
    <property type="entry name" value="UROCANATE HYDRATASE"/>
    <property type="match status" value="1"/>
</dbReference>
<dbReference type="Pfam" id="PF01175">
    <property type="entry name" value="Urocanase"/>
    <property type="match status" value="1"/>
</dbReference>
<dbReference type="Pfam" id="PF17392">
    <property type="entry name" value="Urocanase_C"/>
    <property type="match status" value="1"/>
</dbReference>
<dbReference type="Pfam" id="PF17391">
    <property type="entry name" value="Urocanase_N"/>
    <property type="match status" value="1"/>
</dbReference>
<dbReference type="PIRSF" id="PIRSF001423">
    <property type="entry name" value="Urocanate_hydrat"/>
    <property type="match status" value="1"/>
</dbReference>
<dbReference type="SUPFAM" id="SSF111326">
    <property type="entry name" value="Urocanase"/>
    <property type="match status" value="1"/>
</dbReference>
<dbReference type="PROSITE" id="PS01233">
    <property type="entry name" value="UROCANASE"/>
    <property type="match status" value="1"/>
</dbReference>
<feature type="chain" id="PRO_0000207367" description="Urocanate hydratase">
    <location>
        <begin position="1"/>
        <end position="555"/>
    </location>
</feature>
<feature type="active site" evidence="1">
    <location>
        <position position="409"/>
    </location>
</feature>
<feature type="binding site" evidence="1">
    <location>
        <begin position="51"/>
        <end position="52"/>
    </location>
    <ligand>
        <name>NAD(+)</name>
        <dbReference type="ChEBI" id="CHEBI:57540"/>
    </ligand>
</feature>
<feature type="binding site" evidence="1">
    <location>
        <position position="129"/>
    </location>
    <ligand>
        <name>NAD(+)</name>
        <dbReference type="ChEBI" id="CHEBI:57540"/>
    </ligand>
</feature>
<feature type="binding site" evidence="1">
    <location>
        <begin position="175"/>
        <end position="177"/>
    </location>
    <ligand>
        <name>NAD(+)</name>
        <dbReference type="ChEBI" id="CHEBI:57540"/>
    </ligand>
</feature>
<feature type="binding site" evidence="1">
    <location>
        <position position="195"/>
    </location>
    <ligand>
        <name>NAD(+)</name>
        <dbReference type="ChEBI" id="CHEBI:57540"/>
    </ligand>
</feature>
<feature type="binding site" evidence="1">
    <location>
        <begin position="262"/>
        <end position="266"/>
    </location>
    <ligand>
        <name>NAD(+)</name>
        <dbReference type="ChEBI" id="CHEBI:57540"/>
    </ligand>
</feature>
<feature type="binding site" evidence="1">
    <location>
        <begin position="272"/>
        <end position="273"/>
    </location>
    <ligand>
        <name>NAD(+)</name>
        <dbReference type="ChEBI" id="CHEBI:57540"/>
    </ligand>
</feature>
<feature type="binding site" evidence="1">
    <location>
        <position position="321"/>
    </location>
    <ligand>
        <name>NAD(+)</name>
        <dbReference type="ChEBI" id="CHEBI:57540"/>
    </ligand>
</feature>
<feature type="binding site" evidence="1">
    <location>
        <position position="491"/>
    </location>
    <ligand>
        <name>NAD(+)</name>
        <dbReference type="ChEBI" id="CHEBI:57540"/>
    </ligand>
</feature>